<feature type="chain" id="PRO_0000201743" description="Heat shock protein 15">
    <location>
        <begin position="1"/>
        <end position="133"/>
    </location>
</feature>
<feature type="domain" description="S4 RNA-binding" evidence="2">
    <location>
        <begin position="9"/>
        <end position="71"/>
    </location>
</feature>
<feature type="region of interest" description="Disordered" evidence="3">
    <location>
        <begin position="105"/>
        <end position="133"/>
    </location>
</feature>
<feature type="compositionally biased region" description="Basic and acidic residues" evidence="3">
    <location>
        <begin position="111"/>
        <end position="133"/>
    </location>
</feature>
<accession>P0ACG9</accession>
<accession>P45802</accession>
<proteinExistence type="inferred from homology"/>
<organism>
    <name type="scientific">Escherichia coli O6:H1 (strain CFT073 / ATCC 700928 / UPEC)</name>
    <dbReference type="NCBI Taxonomy" id="199310"/>
    <lineage>
        <taxon>Bacteria</taxon>
        <taxon>Pseudomonadati</taxon>
        <taxon>Pseudomonadota</taxon>
        <taxon>Gammaproteobacteria</taxon>
        <taxon>Enterobacterales</taxon>
        <taxon>Enterobacteriaceae</taxon>
        <taxon>Escherichia</taxon>
    </lineage>
</organism>
<evidence type="ECO:0000250" key="1"/>
<evidence type="ECO:0000255" key="2">
    <source>
        <dbReference type="PROSITE-ProRule" id="PRU00182"/>
    </source>
</evidence>
<evidence type="ECO:0000256" key="3">
    <source>
        <dbReference type="SAM" id="MobiDB-lite"/>
    </source>
</evidence>
<evidence type="ECO:0000305" key="4"/>
<gene>
    <name type="primary">hslR</name>
    <name type="ordered locus">c4171</name>
</gene>
<name>HSLR_ECOL6</name>
<comment type="function">
    <text evidence="1">Involved in the recycling of free 50S ribosomal subunits that still carry a nascent chain. Binds RNA more specifically than DNA. Binds with very high affinity to the free 50S ribosomal subunit. Does not bind it when it is part of the 70S ribosome (By similarity).</text>
</comment>
<comment type="subunit">
    <text evidence="1">Monomer.</text>
</comment>
<comment type="induction">
    <text evidence="1">By heat shock.</text>
</comment>
<comment type="similarity">
    <text evidence="4">Belongs to the HSP15 family.</text>
</comment>
<keyword id="KW-0238">DNA-binding</keyword>
<keyword id="KW-1185">Reference proteome</keyword>
<keyword id="KW-0694">RNA-binding</keyword>
<keyword id="KW-0346">Stress response</keyword>
<sequence>MKEKPAVEVRLDKWLWAARFYKTRALAREMIEGGKVHYNGQRSKPSKIVELNATLTLRQGNDERTVIVKAITEQRRPASEAALLYEETAESVEKREKMALARKLNALTMPHPDRRPDKKERRDLLRFKHGDSE</sequence>
<dbReference type="EMBL" id="AE014075">
    <property type="protein sequence ID" value="AAN82609.1"/>
    <property type="molecule type" value="Genomic_DNA"/>
</dbReference>
<dbReference type="RefSeq" id="WP_000660483.1">
    <property type="nucleotide sequence ID" value="NZ_CP051263.1"/>
</dbReference>
<dbReference type="SMR" id="P0ACG9"/>
<dbReference type="STRING" id="199310.c4171"/>
<dbReference type="GeneID" id="93778598"/>
<dbReference type="KEGG" id="ecc:c4171"/>
<dbReference type="eggNOG" id="COG1188">
    <property type="taxonomic scope" value="Bacteria"/>
</dbReference>
<dbReference type="HOGENOM" id="CLU_101003_2_1_6"/>
<dbReference type="BioCyc" id="ECOL199310:C4171-MONOMER"/>
<dbReference type="Proteomes" id="UP000001410">
    <property type="component" value="Chromosome"/>
</dbReference>
<dbReference type="GO" id="GO:0003677">
    <property type="term" value="F:DNA binding"/>
    <property type="evidence" value="ECO:0007669"/>
    <property type="project" value="UniProtKB-KW"/>
</dbReference>
<dbReference type="GO" id="GO:0043023">
    <property type="term" value="F:ribosomal large subunit binding"/>
    <property type="evidence" value="ECO:0007669"/>
    <property type="project" value="InterPro"/>
</dbReference>
<dbReference type="GO" id="GO:0003727">
    <property type="term" value="F:single-stranded RNA binding"/>
    <property type="evidence" value="ECO:0007669"/>
    <property type="project" value="InterPro"/>
</dbReference>
<dbReference type="GO" id="GO:0034605">
    <property type="term" value="P:cellular response to heat"/>
    <property type="evidence" value="ECO:0007669"/>
    <property type="project" value="InterPro"/>
</dbReference>
<dbReference type="CDD" id="cd00165">
    <property type="entry name" value="S4"/>
    <property type="match status" value="1"/>
</dbReference>
<dbReference type="FunFam" id="3.10.290.10:FF:000008">
    <property type="entry name" value="Heat shock protein 15"/>
    <property type="match status" value="1"/>
</dbReference>
<dbReference type="Gene3D" id="3.10.290.10">
    <property type="entry name" value="RNA-binding S4 domain"/>
    <property type="match status" value="1"/>
</dbReference>
<dbReference type="InterPro" id="IPR025708">
    <property type="entry name" value="HSP15"/>
</dbReference>
<dbReference type="InterPro" id="IPR002942">
    <property type="entry name" value="S4_RNA-bd"/>
</dbReference>
<dbReference type="InterPro" id="IPR036986">
    <property type="entry name" value="S4_RNA-bd_sf"/>
</dbReference>
<dbReference type="NCBIfam" id="NF007673">
    <property type="entry name" value="PRK10348.1"/>
    <property type="match status" value="1"/>
</dbReference>
<dbReference type="Pfam" id="PF01479">
    <property type="entry name" value="S4"/>
    <property type="match status" value="1"/>
</dbReference>
<dbReference type="PIRSF" id="PIRSF016821">
    <property type="entry name" value="HSP15"/>
    <property type="match status" value="1"/>
</dbReference>
<dbReference type="SMART" id="SM00363">
    <property type="entry name" value="S4"/>
    <property type="match status" value="1"/>
</dbReference>
<dbReference type="SUPFAM" id="SSF55174">
    <property type="entry name" value="Alpha-L RNA-binding motif"/>
    <property type="match status" value="1"/>
</dbReference>
<dbReference type="PROSITE" id="PS50889">
    <property type="entry name" value="S4"/>
    <property type="match status" value="1"/>
</dbReference>
<protein>
    <recommendedName>
        <fullName>Heat shock protein 15</fullName>
        <shortName>HSP15</shortName>
    </recommendedName>
</protein>
<reference key="1">
    <citation type="journal article" date="2002" name="Proc. Natl. Acad. Sci. U.S.A.">
        <title>Extensive mosaic structure revealed by the complete genome sequence of uropathogenic Escherichia coli.</title>
        <authorList>
            <person name="Welch R.A."/>
            <person name="Burland V."/>
            <person name="Plunkett G. III"/>
            <person name="Redford P."/>
            <person name="Roesch P."/>
            <person name="Rasko D."/>
            <person name="Buckles E.L."/>
            <person name="Liou S.-R."/>
            <person name="Boutin A."/>
            <person name="Hackett J."/>
            <person name="Stroud D."/>
            <person name="Mayhew G.F."/>
            <person name="Rose D.J."/>
            <person name="Zhou S."/>
            <person name="Schwartz D.C."/>
            <person name="Perna N.T."/>
            <person name="Mobley H.L.T."/>
            <person name="Donnenberg M.S."/>
            <person name="Blattner F.R."/>
        </authorList>
    </citation>
    <scope>NUCLEOTIDE SEQUENCE [LARGE SCALE GENOMIC DNA]</scope>
    <source>
        <strain>CFT073 / ATCC 700928 / UPEC</strain>
    </source>
</reference>